<reference key="1">
    <citation type="journal article" date="2001" name="Nature">
        <title>Complete genome sequence of a multiple drug resistant Salmonella enterica serovar Typhi CT18.</title>
        <authorList>
            <person name="Parkhill J."/>
            <person name="Dougan G."/>
            <person name="James K.D."/>
            <person name="Thomson N.R."/>
            <person name="Pickard D."/>
            <person name="Wain J."/>
            <person name="Churcher C.M."/>
            <person name="Mungall K.L."/>
            <person name="Bentley S.D."/>
            <person name="Holden M.T.G."/>
            <person name="Sebaihia M."/>
            <person name="Baker S."/>
            <person name="Basham D."/>
            <person name="Brooks K."/>
            <person name="Chillingworth T."/>
            <person name="Connerton P."/>
            <person name="Cronin A."/>
            <person name="Davis P."/>
            <person name="Davies R.M."/>
            <person name="Dowd L."/>
            <person name="White N."/>
            <person name="Farrar J."/>
            <person name="Feltwell T."/>
            <person name="Hamlin N."/>
            <person name="Haque A."/>
            <person name="Hien T.T."/>
            <person name="Holroyd S."/>
            <person name="Jagels K."/>
            <person name="Krogh A."/>
            <person name="Larsen T.S."/>
            <person name="Leather S."/>
            <person name="Moule S."/>
            <person name="O'Gaora P."/>
            <person name="Parry C."/>
            <person name="Quail M.A."/>
            <person name="Rutherford K.M."/>
            <person name="Simmonds M."/>
            <person name="Skelton J."/>
            <person name="Stevens K."/>
            <person name="Whitehead S."/>
            <person name="Barrell B.G."/>
        </authorList>
    </citation>
    <scope>NUCLEOTIDE SEQUENCE [LARGE SCALE GENOMIC DNA]</scope>
    <source>
        <strain>CT18</strain>
    </source>
</reference>
<reference key="2">
    <citation type="journal article" date="2003" name="J. Bacteriol.">
        <title>Comparative genomics of Salmonella enterica serovar Typhi strains Ty2 and CT18.</title>
        <authorList>
            <person name="Deng W."/>
            <person name="Liou S.-R."/>
            <person name="Plunkett G. III"/>
            <person name="Mayhew G.F."/>
            <person name="Rose D.J."/>
            <person name="Burland V."/>
            <person name="Kodoyianni V."/>
            <person name="Schwartz D.C."/>
            <person name="Blattner F.R."/>
        </authorList>
    </citation>
    <scope>NUCLEOTIDE SEQUENCE [LARGE SCALE GENOMIC DNA]</scope>
    <source>
        <strain>ATCC 700931 / Ty2</strain>
    </source>
</reference>
<keyword id="KW-0238">DNA-binding</keyword>
<keyword id="KW-0678">Repressor</keyword>
<keyword id="KW-0804">Transcription</keyword>
<keyword id="KW-0805">Transcription regulation</keyword>
<accession>P0A2S3</accession>
<accession>Q9L4H9</accession>
<evidence type="ECO:0000250" key="1"/>
<evidence type="ECO:0000255" key="2">
    <source>
        <dbReference type="PROSITE-ProRule" id="PRU00307"/>
    </source>
</evidence>
<comment type="function">
    <text evidence="1">Transcriptional repressor for the pyruvate dehydrogenase complex genes aceEF and lpd.</text>
</comment>
<gene>
    <name type="primary">pdhR</name>
    <name type="ordered locus">STY0174</name>
    <name type="ordered locus">t0157</name>
</gene>
<feature type="chain" id="PRO_0000050665" description="Pyruvate dehydrogenase complex repressor">
    <location>
        <begin position="1"/>
        <end position="254"/>
    </location>
</feature>
<feature type="domain" description="HTH gntR-type" evidence="2">
    <location>
        <begin position="9"/>
        <end position="77"/>
    </location>
</feature>
<feature type="DNA-binding region" description="H-T-H motif" evidence="2">
    <location>
        <begin position="37"/>
        <end position="56"/>
    </location>
</feature>
<dbReference type="EMBL" id="AL513382">
    <property type="protein sequence ID" value="CAD01310.1"/>
    <property type="molecule type" value="Genomic_DNA"/>
</dbReference>
<dbReference type="EMBL" id="AE014613">
    <property type="protein sequence ID" value="AAO67889.1"/>
    <property type="molecule type" value="Genomic_DNA"/>
</dbReference>
<dbReference type="RefSeq" id="NP_454765.1">
    <property type="nucleotide sequence ID" value="NC_003198.1"/>
</dbReference>
<dbReference type="RefSeq" id="WP_000331771.1">
    <property type="nucleotide sequence ID" value="NZ_WSUR01000009.1"/>
</dbReference>
<dbReference type="SMR" id="P0A2S3"/>
<dbReference type="STRING" id="220341.gene:17584212"/>
<dbReference type="KEGG" id="stt:t0157"/>
<dbReference type="KEGG" id="sty:STY0174"/>
<dbReference type="PATRIC" id="fig|220341.7.peg.175"/>
<dbReference type="eggNOG" id="COG2186">
    <property type="taxonomic scope" value="Bacteria"/>
</dbReference>
<dbReference type="HOGENOM" id="CLU_017584_9_5_6"/>
<dbReference type="OMA" id="ASHNDVM"/>
<dbReference type="OrthoDB" id="5450856at2"/>
<dbReference type="Proteomes" id="UP000000541">
    <property type="component" value="Chromosome"/>
</dbReference>
<dbReference type="Proteomes" id="UP000002670">
    <property type="component" value="Chromosome"/>
</dbReference>
<dbReference type="GO" id="GO:0003677">
    <property type="term" value="F:DNA binding"/>
    <property type="evidence" value="ECO:0007669"/>
    <property type="project" value="UniProtKB-KW"/>
</dbReference>
<dbReference type="GO" id="GO:0003700">
    <property type="term" value="F:DNA-binding transcription factor activity"/>
    <property type="evidence" value="ECO:0007669"/>
    <property type="project" value="InterPro"/>
</dbReference>
<dbReference type="CDD" id="cd07377">
    <property type="entry name" value="WHTH_GntR"/>
    <property type="match status" value="1"/>
</dbReference>
<dbReference type="FunFam" id="1.10.10.10:FF:000048">
    <property type="entry name" value="Pyruvate dehydrogenase complex transcriptional repressor"/>
    <property type="match status" value="1"/>
</dbReference>
<dbReference type="FunFam" id="1.20.120.530:FF:000001">
    <property type="entry name" value="Pyruvate dehydrogenase complex transcriptional repressor"/>
    <property type="match status" value="1"/>
</dbReference>
<dbReference type="Gene3D" id="1.20.120.530">
    <property type="entry name" value="GntR ligand-binding domain-like"/>
    <property type="match status" value="1"/>
</dbReference>
<dbReference type="Gene3D" id="1.10.10.10">
    <property type="entry name" value="Winged helix-like DNA-binding domain superfamily/Winged helix DNA-binding domain"/>
    <property type="match status" value="1"/>
</dbReference>
<dbReference type="InterPro" id="IPR011711">
    <property type="entry name" value="GntR_C"/>
</dbReference>
<dbReference type="InterPro" id="IPR008920">
    <property type="entry name" value="TF_FadR/GntR_C"/>
</dbReference>
<dbReference type="InterPro" id="IPR000524">
    <property type="entry name" value="Tscrpt_reg_HTH_GntR"/>
</dbReference>
<dbReference type="InterPro" id="IPR036388">
    <property type="entry name" value="WH-like_DNA-bd_sf"/>
</dbReference>
<dbReference type="InterPro" id="IPR036390">
    <property type="entry name" value="WH_DNA-bd_sf"/>
</dbReference>
<dbReference type="NCBIfam" id="NF007001">
    <property type="entry name" value="PRK09464.1"/>
    <property type="match status" value="1"/>
</dbReference>
<dbReference type="PANTHER" id="PTHR43537:SF34">
    <property type="entry name" value="PYRUVATE DEHYDROGENASE COMPLEX REPRESSOR"/>
    <property type="match status" value="1"/>
</dbReference>
<dbReference type="PANTHER" id="PTHR43537">
    <property type="entry name" value="TRANSCRIPTIONAL REGULATOR, GNTR FAMILY"/>
    <property type="match status" value="1"/>
</dbReference>
<dbReference type="Pfam" id="PF07729">
    <property type="entry name" value="FCD"/>
    <property type="match status" value="1"/>
</dbReference>
<dbReference type="Pfam" id="PF00392">
    <property type="entry name" value="GntR"/>
    <property type="match status" value="1"/>
</dbReference>
<dbReference type="PRINTS" id="PR00035">
    <property type="entry name" value="HTHGNTR"/>
</dbReference>
<dbReference type="SMART" id="SM00895">
    <property type="entry name" value="FCD"/>
    <property type="match status" value="1"/>
</dbReference>
<dbReference type="SMART" id="SM00345">
    <property type="entry name" value="HTH_GNTR"/>
    <property type="match status" value="1"/>
</dbReference>
<dbReference type="SUPFAM" id="SSF48008">
    <property type="entry name" value="GntR ligand-binding domain-like"/>
    <property type="match status" value="1"/>
</dbReference>
<dbReference type="SUPFAM" id="SSF46785">
    <property type="entry name" value="Winged helix' DNA-binding domain"/>
    <property type="match status" value="1"/>
</dbReference>
<dbReference type="PROSITE" id="PS50949">
    <property type="entry name" value="HTH_GNTR"/>
    <property type="match status" value="1"/>
</dbReference>
<proteinExistence type="inferred from homology"/>
<sequence>MAYSKIRQPKLSDVIEQQLEFLILEGTLRPGEKLPPERELAKQFDVSRPSLREAIQRLEAKGLLLRRQGGGTFVQSSLWQSFSDPLVELLSDHPESQFDLLETRHALEGIAAYYAALRSTDEDKDRIRELHHAIELAQESGDLDAESEAVLQYQIAVTEAAHNVVLLHLLRCMEPMLAQNVRQNFELLYARREMLPLVSTHRTRIFEAIMAGKPEEAREASHRHLAFIEEIMLDRSREESRRERALRRLEQRKN</sequence>
<name>PDHR_SALTI</name>
<organism>
    <name type="scientific">Salmonella typhi</name>
    <dbReference type="NCBI Taxonomy" id="90370"/>
    <lineage>
        <taxon>Bacteria</taxon>
        <taxon>Pseudomonadati</taxon>
        <taxon>Pseudomonadota</taxon>
        <taxon>Gammaproteobacteria</taxon>
        <taxon>Enterobacterales</taxon>
        <taxon>Enterobacteriaceae</taxon>
        <taxon>Salmonella</taxon>
    </lineage>
</organism>
<protein>
    <recommendedName>
        <fullName>Pyruvate dehydrogenase complex repressor</fullName>
    </recommendedName>
</protein>